<name>PLCL1_RAT</name>
<accession>Q62688</accession>
<comment type="function">
    <text evidence="9 12">Involved in an inositol phospholipid-based intracellular signaling cascade. Shows no PLC activity to phosphatidylinositol 4,5-bisphosphate and phosphatidylinositol. Component in the phospho-dependent endocytosis process of GABA A receptor. Acts as an inhibitor of PPP1C.</text>
</comment>
<comment type="subunit">
    <text evidence="1 9 10 12">Interacts with PPP2CA, GABA receptor beta subunits, GABA receptor gamma-2 subunits (By similarity). Interacts with Ins(1,4,5)P3, Ins(1,4,5,6)P4, GABARAP, and PPP1C. May form a ternary complex with GABA receptor beta subunit and GABARAP. The formation of a ternary complex with GABA receptor beta subunit and GABARAP could be the key step for facilitating the association of GABARAP with the GABA receptor gamma-2 subunit and to allow it to be transported at the right destination.</text>
</comment>
<comment type="subcellular location">
    <subcellularLocation>
        <location evidence="9 12">Cytoplasm</location>
    </subcellularLocation>
</comment>
<comment type="tissue specificity">
    <text evidence="11">Expressed in brain. Found in the granular cell and Purkinje cell layers in the cerebellum; and in the hippocampal pyramidal cells, dentate granule cells and pyramidal granule cells of the cerebral cortex in the cerebrum.</text>
</comment>
<comment type="PTM">
    <text evidence="1 9">Phosphorylation of Thr-94 resulted in dissociation of PPP1C from PRIP1 (By similarity). In vitro, phosphorylated by the catalytic subunit of PKA.</text>
</comment>
<comment type="similarity">
    <text evidence="13">Belongs to the PRIP family.</text>
</comment>
<comment type="caution">
    <text evidence="13">In the PI-PLC X-box Asn-459 is present instead of the conserved His which is one of the active site residues. It is therefore expected that this protein lacks catalytic activity.</text>
</comment>
<organism>
    <name type="scientific">Rattus norvegicus</name>
    <name type="common">Rat</name>
    <dbReference type="NCBI Taxonomy" id="10116"/>
    <lineage>
        <taxon>Eukaryota</taxon>
        <taxon>Metazoa</taxon>
        <taxon>Chordata</taxon>
        <taxon>Craniata</taxon>
        <taxon>Vertebrata</taxon>
        <taxon>Euteleostomi</taxon>
        <taxon>Mammalia</taxon>
        <taxon>Eutheria</taxon>
        <taxon>Euarchontoglires</taxon>
        <taxon>Glires</taxon>
        <taxon>Rodentia</taxon>
        <taxon>Myomorpha</taxon>
        <taxon>Muroidea</taxon>
        <taxon>Muridae</taxon>
        <taxon>Murinae</taxon>
        <taxon>Rattus</taxon>
    </lineage>
</organism>
<dbReference type="EMBL" id="D45920">
    <property type="protein sequence ID" value="BAA08351.1"/>
    <property type="molecule type" value="mRNA"/>
</dbReference>
<dbReference type="PIR" id="S62358">
    <property type="entry name" value="S62358"/>
</dbReference>
<dbReference type="RefSeq" id="NP_445908.1">
    <property type="nucleotide sequence ID" value="NM_053456.1"/>
</dbReference>
<dbReference type="SMR" id="Q62688"/>
<dbReference type="FunCoup" id="Q62688">
    <property type="interactions" value="290"/>
</dbReference>
<dbReference type="STRING" id="10116.ENSRNOP00000050087"/>
<dbReference type="BindingDB" id="Q62688"/>
<dbReference type="ChEMBL" id="CHEMBL3364"/>
<dbReference type="GlyGen" id="Q62688">
    <property type="glycosylation" value="1 site"/>
</dbReference>
<dbReference type="iPTMnet" id="Q62688"/>
<dbReference type="PhosphoSitePlus" id="Q62688"/>
<dbReference type="PaxDb" id="10116-ENSRNOP00000050087"/>
<dbReference type="GeneID" id="84587"/>
<dbReference type="KEGG" id="rno:84587"/>
<dbReference type="UCSC" id="RGD:708420">
    <property type="organism name" value="rat"/>
</dbReference>
<dbReference type="AGR" id="RGD:708420"/>
<dbReference type="CTD" id="5334"/>
<dbReference type="RGD" id="708420">
    <property type="gene designation" value="Plcl1"/>
</dbReference>
<dbReference type="eggNOG" id="KOG0169">
    <property type="taxonomic scope" value="Eukaryota"/>
</dbReference>
<dbReference type="InParanoid" id="Q62688"/>
<dbReference type="PhylomeDB" id="Q62688"/>
<dbReference type="PRO" id="PR:Q62688"/>
<dbReference type="Proteomes" id="UP000002494">
    <property type="component" value="Unplaced"/>
</dbReference>
<dbReference type="GO" id="GO:0005737">
    <property type="term" value="C:cytoplasm"/>
    <property type="evidence" value="ECO:0007669"/>
    <property type="project" value="UniProtKB-SubCell"/>
</dbReference>
<dbReference type="GO" id="GO:0050811">
    <property type="term" value="F:GABA receptor binding"/>
    <property type="evidence" value="ECO:0000314"/>
    <property type="project" value="MGI"/>
</dbReference>
<dbReference type="GO" id="GO:0004435">
    <property type="term" value="F:phosphatidylinositol-4,5-bisphosphate phospholipase C activity"/>
    <property type="evidence" value="ECO:0000318"/>
    <property type="project" value="GO_Central"/>
</dbReference>
<dbReference type="GO" id="GO:0007214">
    <property type="term" value="P:gamma-aminobutyric acid signaling pathway"/>
    <property type="evidence" value="ECO:0000266"/>
    <property type="project" value="RGD"/>
</dbReference>
<dbReference type="GO" id="GO:0120163">
    <property type="term" value="P:negative regulation of cold-induced thermogenesis"/>
    <property type="evidence" value="ECO:0000250"/>
    <property type="project" value="YuBioLab"/>
</dbReference>
<dbReference type="GO" id="GO:0046488">
    <property type="term" value="P:phosphatidylinositol metabolic process"/>
    <property type="evidence" value="ECO:0000318"/>
    <property type="project" value="GO_Central"/>
</dbReference>
<dbReference type="GO" id="GO:0048015">
    <property type="term" value="P:phosphatidylinositol-mediated signaling"/>
    <property type="evidence" value="ECO:0000318"/>
    <property type="project" value="GO_Central"/>
</dbReference>
<dbReference type="GO" id="GO:0032228">
    <property type="term" value="P:regulation of synaptic transmission, GABAergic"/>
    <property type="evidence" value="ECO:0000266"/>
    <property type="project" value="RGD"/>
</dbReference>
<dbReference type="GO" id="GO:0051209">
    <property type="term" value="P:release of sequestered calcium ion into cytosol"/>
    <property type="evidence" value="ECO:0000318"/>
    <property type="project" value="GO_Central"/>
</dbReference>
<dbReference type="CDD" id="cd00275">
    <property type="entry name" value="C2_PLC_like"/>
    <property type="match status" value="1"/>
</dbReference>
<dbReference type="CDD" id="cd13364">
    <property type="entry name" value="PH_PLC_eta"/>
    <property type="match status" value="1"/>
</dbReference>
<dbReference type="CDD" id="cd08597">
    <property type="entry name" value="PI-PLCc_PRIP_metazoa"/>
    <property type="match status" value="1"/>
</dbReference>
<dbReference type="FunFam" id="1.10.238.10:FF:000005">
    <property type="entry name" value="Phosphoinositide phospholipase C"/>
    <property type="match status" value="1"/>
</dbReference>
<dbReference type="FunFam" id="2.30.29.30:FF:000025">
    <property type="entry name" value="Phosphoinositide phospholipase C"/>
    <property type="match status" value="1"/>
</dbReference>
<dbReference type="FunFam" id="2.60.40.150:FF:000017">
    <property type="entry name" value="Phosphoinositide phospholipase C"/>
    <property type="match status" value="1"/>
</dbReference>
<dbReference type="FunFam" id="3.20.20.190:FF:000001">
    <property type="entry name" value="Phosphoinositide phospholipase C"/>
    <property type="match status" value="1"/>
</dbReference>
<dbReference type="Gene3D" id="2.60.40.150">
    <property type="entry name" value="C2 domain"/>
    <property type="match status" value="1"/>
</dbReference>
<dbReference type="Gene3D" id="1.10.238.10">
    <property type="entry name" value="EF-hand"/>
    <property type="match status" value="1"/>
</dbReference>
<dbReference type="Gene3D" id="3.20.20.190">
    <property type="entry name" value="Phosphatidylinositol (PI) phosphodiesterase"/>
    <property type="match status" value="1"/>
</dbReference>
<dbReference type="Gene3D" id="2.30.29.30">
    <property type="entry name" value="Pleckstrin-homology domain (PH domain)/Phosphotyrosine-binding domain (PTB)"/>
    <property type="match status" value="1"/>
</dbReference>
<dbReference type="InterPro" id="IPR000008">
    <property type="entry name" value="C2_dom"/>
</dbReference>
<dbReference type="InterPro" id="IPR035892">
    <property type="entry name" value="C2_domain_sf"/>
</dbReference>
<dbReference type="InterPro" id="IPR011992">
    <property type="entry name" value="EF-hand-dom_pair"/>
</dbReference>
<dbReference type="InterPro" id="IPR011993">
    <property type="entry name" value="PH-like_dom_sf"/>
</dbReference>
<dbReference type="InterPro" id="IPR001849">
    <property type="entry name" value="PH_domain"/>
</dbReference>
<dbReference type="InterPro" id="IPR001192">
    <property type="entry name" value="PI-PLC_fam"/>
</dbReference>
<dbReference type="InterPro" id="IPR017946">
    <property type="entry name" value="PLC-like_Pdiesterase_TIM-brl"/>
</dbReference>
<dbReference type="InterPro" id="IPR015359">
    <property type="entry name" value="PLC_EF-hand-like"/>
</dbReference>
<dbReference type="InterPro" id="IPR000909">
    <property type="entry name" value="PLipase_C_PInositol-sp_X_dom"/>
</dbReference>
<dbReference type="InterPro" id="IPR001711">
    <property type="entry name" value="PLipase_C_Pinositol-sp_Y"/>
</dbReference>
<dbReference type="PANTHER" id="PTHR10336:SF102">
    <property type="entry name" value="INACTIVE PHOSPHOLIPASE C-LIKE PROTEIN 1"/>
    <property type="match status" value="1"/>
</dbReference>
<dbReference type="PANTHER" id="PTHR10336">
    <property type="entry name" value="PHOSPHOINOSITIDE-SPECIFIC PHOSPHOLIPASE C FAMILY PROTEIN"/>
    <property type="match status" value="1"/>
</dbReference>
<dbReference type="Pfam" id="PF00168">
    <property type="entry name" value="C2"/>
    <property type="match status" value="1"/>
</dbReference>
<dbReference type="Pfam" id="PF09279">
    <property type="entry name" value="EF-hand_like"/>
    <property type="match status" value="1"/>
</dbReference>
<dbReference type="Pfam" id="PF16457">
    <property type="entry name" value="PH_12"/>
    <property type="match status" value="1"/>
</dbReference>
<dbReference type="Pfam" id="PF00388">
    <property type="entry name" value="PI-PLC-X"/>
    <property type="match status" value="1"/>
</dbReference>
<dbReference type="Pfam" id="PF00387">
    <property type="entry name" value="PI-PLC-Y"/>
    <property type="match status" value="1"/>
</dbReference>
<dbReference type="PRINTS" id="PR00390">
    <property type="entry name" value="PHPHLIPASEC"/>
</dbReference>
<dbReference type="SMART" id="SM00239">
    <property type="entry name" value="C2"/>
    <property type="match status" value="1"/>
</dbReference>
<dbReference type="SMART" id="SM00233">
    <property type="entry name" value="PH"/>
    <property type="match status" value="1"/>
</dbReference>
<dbReference type="SMART" id="SM00148">
    <property type="entry name" value="PLCXc"/>
    <property type="match status" value="1"/>
</dbReference>
<dbReference type="SMART" id="SM00149">
    <property type="entry name" value="PLCYc"/>
    <property type="match status" value="1"/>
</dbReference>
<dbReference type="SUPFAM" id="SSF49562">
    <property type="entry name" value="C2 domain (Calcium/lipid-binding domain, CaLB)"/>
    <property type="match status" value="1"/>
</dbReference>
<dbReference type="SUPFAM" id="SSF47473">
    <property type="entry name" value="EF-hand"/>
    <property type="match status" value="1"/>
</dbReference>
<dbReference type="SUPFAM" id="SSF50729">
    <property type="entry name" value="PH domain-like"/>
    <property type="match status" value="1"/>
</dbReference>
<dbReference type="SUPFAM" id="SSF51695">
    <property type="entry name" value="PLC-like phosphodiesterases"/>
    <property type="match status" value="1"/>
</dbReference>
<dbReference type="PROSITE" id="PS50004">
    <property type="entry name" value="C2"/>
    <property type="match status" value="1"/>
</dbReference>
<dbReference type="PROSITE" id="PS50003">
    <property type="entry name" value="PH_DOMAIN"/>
    <property type="match status" value="1"/>
</dbReference>
<dbReference type="PROSITE" id="PS50007">
    <property type="entry name" value="PIPLC_X_DOMAIN"/>
    <property type="match status" value="1"/>
</dbReference>
<dbReference type="PROSITE" id="PS50008">
    <property type="entry name" value="PIPLC_Y_DOMAIN"/>
    <property type="match status" value="1"/>
</dbReference>
<gene>
    <name type="primary">Plcl1</name>
</gene>
<protein>
    <recommendedName>
        <fullName>Inactive phospholipase C-like protein 1</fullName>
        <shortName>PLC-L1</shortName>
    </recommendedName>
    <alternativeName>
        <fullName>PRIP1</fullName>
    </alternativeName>
    <alternativeName>
        <fullName>Phospholipase C-related but catalytically inactive protein</fullName>
    </alternativeName>
    <alternativeName>
        <fullName>p130</fullName>
    </alternativeName>
</protein>
<evidence type="ECO:0000250" key="1"/>
<evidence type="ECO:0000250" key="2">
    <source>
        <dbReference type="UniProtKB" id="Q15111"/>
    </source>
</evidence>
<evidence type="ECO:0000255" key="3"/>
<evidence type="ECO:0000255" key="4">
    <source>
        <dbReference type="PROSITE-ProRule" id="PRU00041"/>
    </source>
</evidence>
<evidence type="ECO:0000255" key="5">
    <source>
        <dbReference type="PROSITE-ProRule" id="PRU00145"/>
    </source>
</evidence>
<evidence type="ECO:0000255" key="6">
    <source>
        <dbReference type="PROSITE-ProRule" id="PRU00270"/>
    </source>
</evidence>
<evidence type="ECO:0000255" key="7">
    <source>
        <dbReference type="PROSITE-ProRule" id="PRU00271"/>
    </source>
</evidence>
<evidence type="ECO:0000256" key="8">
    <source>
        <dbReference type="SAM" id="MobiDB-lite"/>
    </source>
</evidence>
<evidence type="ECO:0000269" key="9">
    <source>
    </source>
</evidence>
<evidence type="ECO:0000269" key="10">
    <source>
    </source>
</evidence>
<evidence type="ECO:0000269" key="11">
    <source>
    </source>
</evidence>
<evidence type="ECO:0000269" key="12">
    <source>
    </source>
</evidence>
<evidence type="ECO:0000305" key="13"/>
<evidence type="ECO:0007744" key="14">
    <source>
    </source>
</evidence>
<sequence length="1096" mass="122772">MAEGAASREAPAPLDVAGGEDDPRAGADAASGDAAPEASGGRMRDRRSGVALPGNAGVPADSEAGLLEAARATPRRTSIIKDPSNQKCGGRKKTVSFSSMPSEKKISSAHDCISFMQAGCELKKVRPNSRIYNRFFTLDTDLQALRWEPSKKDLEKAKLDISAIKEIRLGKNTETFRNNGLADQICEDCAFSILHGENYESLDLVANSADVANIWVSGLRYLVSRSKQPLDFMEGNQNTPRFMWLKTVFEAADVDGNGIMLEDTSVELIKQLNPTLKESKIRLKFKEIQKSKEKLTTRVTEEEFCEAFCELCTRPEVYFLLVQISKNKEYLDANDLMLFLEVEQGVTHVTEDMCLDIIRRYELSEDGRQKGFLAIDGFTQYLLSPECDIFDPEQKKVAQDMTQPLSHYYINASHNTYLIEDQFRGPADINGYVRALKMGCRSIELDVSDGPDNEPILCNRNNMAMLLSFRSVLEVINKFAFVASEYPLILCLGNHCSLPQQRVMVQQMKKVFGNKLYTEAPLSSESYLPSPEKLKHMIIVKGKKLPSESDLLEGEVTDEDEEAEMSRRVSGDYNGEQKHIWLCRELSDLVSICKSVQYRDFELSMKTQNYWEICSFSETLASRIANEYPEDFVNYNKKFLSRVYPSAMRIDSSNLNPQDFWNCGCQIVAMNFQTPGPMMDLHTGWFLQNGGCGYVLRPSIMRDEVSYFSANTKGIVPGVSPLLLHIKIISGQNFPKPKGACAKGDVIDPYVCVEIHGIPADCSEQRTKTVQQNSDNPIFDETFEFQVNLPELTMVRFVILDDDYIGDEFIGQYTIPFECLQPGYRHVPLRSFVGDIMEHVTLFVHIAITNRSGGGKAQKRSLSVRMGKKVREYTMLRNIGLKTIDDIFKIAVHPLREAIDMRENMQNAIVSVKELCGLPPIASLKQCLLTLSSRLITSDSTPSVSLVMKDCFPYLEPLGTIPDVQKRMLAAYDLMIQESRVLIEMADTVQEKIVQCQKAGMEFHEELHNLGAKEGLKGRKLNKAIESFAWNITVLKGQGDLLKNAKNEAVENIKQIQLACLSCGLSKGPGSAAEAKGKRSLEAIEEKESSEENGKL</sequence>
<proteinExistence type="evidence at protein level"/>
<keyword id="KW-0175">Coiled coil</keyword>
<keyword id="KW-0963">Cytoplasm</keyword>
<keyword id="KW-0903">Direct protein sequencing</keyword>
<keyword id="KW-0597">Phosphoprotein</keyword>
<keyword id="KW-1185">Reference proteome</keyword>
<keyword id="KW-0807">Transducer</keyword>
<feature type="chain" id="PRO_0000319416" description="Inactive phospholipase C-like protein 1">
    <location>
        <begin position="1"/>
        <end position="1096"/>
    </location>
</feature>
<feature type="domain" description="PH" evidence="5">
    <location>
        <begin position="114"/>
        <end position="224"/>
    </location>
</feature>
<feature type="domain" description="PI-PLC X-box" evidence="6">
    <location>
        <begin position="399"/>
        <end position="543"/>
    </location>
</feature>
<feature type="domain" description="PI-PLC Y-box" evidence="7">
    <location>
        <begin position="586"/>
        <end position="702"/>
    </location>
</feature>
<feature type="domain" description="C2" evidence="4">
    <location>
        <begin position="702"/>
        <end position="831"/>
    </location>
</feature>
<feature type="region of interest" description="Disordered" evidence="8">
    <location>
        <begin position="1"/>
        <end position="101"/>
    </location>
</feature>
<feature type="region of interest" description="Interaction with PPP1C">
    <location>
        <begin position="83"/>
        <end position="222"/>
    </location>
</feature>
<feature type="region of interest" description="Interaction with GABA A beta subunit">
    <location>
        <begin position="544"/>
        <end position="568"/>
    </location>
</feature>
<feature type="region of interest" description="Disordered" evidence="8">
    <location>
        <begin position="1067"/>
        <end position="1096"/>
    </location>
</feature>
<feature type="coiled-coil region" evidence="3">
    <location>
        <begin position="1040"/>
        <end position="1060"/>
    </location>
</feature>
<feature type="compositionally biased region" description="Low complexity" evidence="8">
    <location>
        <begin position="26"/>
        <end position="41"/>
    </location>
</feature>
<feature type="compositionally biased region" description="Basic and acidic residues" evidence="8">
    <location>
        <begin position="1075"/>
        <end position="1096"/>
    </location>
</feature>
<feature type="modified residue" description="Phosphoserine" evidence="14">
    <location>
        <position position="48"/>
    </location>
</feature>
<feature type="modified residue" description="Phosphoserine" evidence="2">
    <location>
        <position position="78"/>
    </location>
</feature>
<feature type="modified residue" description="Phosphothreonine" evidence="14">
    <location>
        <position position="94"/>
    </location>
</feature>
<feature type="modified residue" description="Phosphoserine" evidence="14">
    <location>
        <position position="96"/>
    </location>
</feature>
<feature type="modified residue" description="Phosphothreonine" evidence="14">
    <location>
        <position position="557"/>
    </location>
</feature>
<feature type="modified residue" description="Phosphoserine" evidence="14">
    <location>
        <position position="570"/>
    </location>
</feature>
<feature type="modified residue" description="Phosphoserine" evidence="14">
    <location>
        <position position="1080"/>
    </location>
</feature>
<reference key="1">
    <citation type="journal article" date="1996" name="Biochem. J.">
        <title>A new inositol 1,4,5-trisphosphate binding protein similar to phospholipase C-delta 1.</title>
        <authorList>
            <person name="Kanematsu T."/>
            <person name="Misumi Y."/>
            <person name="Watanabe Y."/>
            <person name="Ozaki S."/>
            <person name="Koga T."/>
            <person name="Iwanaga S."/>
            <person name="Ikehara Y."/>
            <person name="Hirata M."/>
        </authorList>
    </citation>
    <scope>NUCLEOTIDE SEQUENCE [MRNA]</scope>
    <scope>PROTEIN SEQUENCE OF 172-191; 228-242 AND 1024-1034</scope>
    <scope>FUNCTION</scope>
    <scope>SUBCELLULAR LOCATION</scope>
    <scope>INTERACTION WITH INS(1,4,5)P3 AND INS(1,4,5,6)P4</scope>
    <source>
        <strain>Wistar</strain>
        <tissue>Brain</tissue>
    </source>
</reference>
<reference key="2">
    <citation type="journal article" date="2001" name="J. Biol. Chem.">
        <title>Interaction of p130 with, and consequent inhibition of, the catalytic subunit of protein phosphatase 1alpha.</title>
        <authorList>
            <person name="Yoshimura K."/>
            <person name="Takeuchi H."/>
            <person name="Sato O."/>
            <person name="Hidaka K."/>
            <person name="Doira N."/>
            <person name="Terunuma M."/>
            <person name="Harada K."/>
            <person name="Ogawa Y."/>
            <person name="Ito Y."/>
            <person name="Kanematsu T."/>
            <person name="Hirata M."/>
        </authorList>
    </citation>
    <scope>SUBCELLULAR LOCATION</scope>
    <scope>INTERACTION WITH PPP1C</scope>
    <scope>PHOSPHORYLATION BY PKA</scope>
    <scope>FUNCTION</scope>
</reference>
<reference key="3">
    <citation type="journal article" date="2002" name="EMBO J.">
        <title>Role of the PLC-related, catalytically inactive protein p130 in GABA(A) receptor function.</title>
        <authorList>
            <person name="Kanematsu T."/>
            <person name="Jang I.S."/>
            <person name="Yamaguchi T."/>
            <person name="Nagahama H."/>
            <person name="Yoshimura K."/>
            <person name="Hidaka K."/>
            <person name="Matsuda M."/>
            <person name="Takeuchi H."/>
            <person name="Misumi Y."/>
            <person name="Nakayama K."/>
            <person name="Yamamoto T."/>
            <person name="Akaike N."/>
            <person name="Hirata M."/>
            <person name="Nakayama K."/>
        </authorList>
    </citation>
    <scope>INTERACTION WITH GABARAP AND PPP1C</scope>
</reference>
<reference key="4">
    <citation type="journal article" date="2002" name="Life Sci.">
        <title>Molecules interacting with PRIP-2, a novel Ins(1,4,5)P3 binding protein type 2: Comparison with PRIP-1.</title>
        <authorList>
            <person name="Uji A."/>
            <person name="Matsuda M."/>
            <person name="Kukita T."/>
            <person name="Maeda K."/>
            <person name="Kanematsu T."/>
            <person name="Hirata M."/>
        </authorList>
    </citation>
    <scope>TISSUE SPECIFICITY</scope>
</reference>
<reference key="5">
    <citation type="journal article" date="2012" name="Nat. Commun.">
        <title>Quantitative maps of protein phosphorylation sites across 14 different rat organs and tissues.</title>
        <authorList>
            <person name="Lundby A."/>
            <person name="Secher A."/>
            <person name="Lage K."/>
            <person name="Nordsborg N.B."/>
            <person name="Dmytriyev A."/>
            <person name="Lundby C."/>
            <person name="Olsen J.V."/>
        </authorList>
    </citation>
    <scope>PHOSPHORYLATION [LARGE SCALE ANALYSIS] AT SER-48; THR-94; SER-96; THR-557; SER-570 AND SER-1080</scope>
    <scope>IDENTIFICATION BY MASS SPECTROMETRY [LARGE SCALE ANALYSIS]</scope>
</reference>